<accession>Q17667</accession>
<keyword id="KW-0175">Coiled coil</keyword>
<keyword id="KW-0217">Developmental protein</keyword>
<keyword id="KW-0256">Endoplasmic reticulum</keyword>
<keyword id="KW-0472">Membrane</keyword>
<keyword id="KW-0479">Metal-binding</keyword>
<keyword id="KW-1185">Reference proteome</keyword>
<keyword id="KW-0812">Transmembrane</keyword>
<keyword id="KW-1133">Transmembrane helix</keyword>
<keyword id="KW-0862">Zinc</keyword>
<keyword id="KW-0863">Zinc-finger</keyword>
<protein>
    <recommendedName>
        <fullName evidence="6">Endoplasmic reticulum junction formation protein lunapark-1</fullName>
    </recommendedName>
    <alternativeName>
        <fullName evidence="2">ER junction formation factor lunapark</fullName>
    </alternativeName>
</protein>
<reference key="1">
    <citation type="journal article" date="1998" name="Science">
        <title>Genome sequence of the nematode C. elegans: a platform for investigating biology.</title>
        <authorList>
            <consortium name="The C. elegans sequencing consortium"/>
        </authorList>
    </citation>
    <scope>NUCLEOTIDE SEQUENCE [LARGE SCALE GENOMIC DNA]</scope>
    <source>
        <strain>Bristol N2</strain>
    </source>
</reference>
<reference key="2">
    <citation type="journal article" date="2008" name="Eur. J. Neurosci.">
        <title>The evolutionarily conserved gene LNP-1 is required for synaptic vesicle trafficking and synaptic transmission.</title>
        <authorList>
            <person name="Ghila L."/>
            <person name="Gomez M."/>
        </authorList>
    </citation>
    <scope>FUNCTION</scope>
    <scope>SUBCELLULAR LOCATION</scope>
    <scope>TISSUE SPECIFICITY</scope>
    <scope>DISRUPTION PHENOTYPE</scope>
</reference>
<comment type="function">
    <text evidence="1 5">Plays a role in tubular endoplasmic reticulum network formation and maintenance (By similarity). May be involved in central nervous system development. Has a presynaptic role in neurotransmission. Likely to operate in synaptogenesis by regulating vesicular transport or localization. Required for correct localization of rab-3 and snb-1.</text>
</comment>
<comment type="subcellular location">
    <subcellularLocation>
        <location evidence="1">Endoplasmic reticulum membrane</location>
        <topology evidence="5">Multi-pass membrane protein</topology>
    </subcellularLocation>
    <text evidence="1">Localizes to three-way ER tubule junctions.</text>
</comment>
<comment type="tissue specificity">
    <text evidence="5">Expressed in cell bodies along the ventral cord around the pharynx and the tail both in larvae and adults. Also expressed in muscles and hypodermal cells.</text>
</comment>
<comment type="disruption phenotype">
    <text evidence="5">Worms exhibit increased resistance to aldicarb indicative of an affect on neurotransmission but equal sensitivity to levamisole which specifically inhibits the postsynapse. Mutants also show mislocalized rab-3 and snb-1 proteins.</text>
</comment>
<comment type="similarity">
    <text evidence="6">Belongs to the lunapark family.</text>
</comment>
<feature type="chain" id="PRO_0000065153" description="Endoplasmic reticulum junction formation protein lunapark-1">
    <location>
        <begin position="1"/>
        <end position="342"/>
    </location>
</feature>
<feature type="topological domain" description="Cytoplasmic" evidence="1">
    <location>
        <begin position="1"/>
        <end position="39"/>
    </location>
</feature>
<feature type="transmembrane region" description="Helical" evidence="3">
    <location>
        <begin position="40"/>
        <end position="60"/>
    </location>
</feature>
<feature type="topological domain" description="Lumenal" evidence="1">
    <location>
        <begin position="61"/>
        <end position="68"/>
    </location>
</feature>
<feature type="transmembrane region" description="Helical" evidence="3">
    <location>
        <begin position="69"/>
        <end position="89"/>
    </location>
</feature>
<feature type="topological domain" description="Cytoplasmic" evidence="1">
    <location>
        <begin position="90"/>
        <end position="342"/>
    </location>
</feature>
<feature type="zinc finger region" description="C4-type; plays a role in ER morphology" evidence="1">
    <location>
        <begin position="236"/>
        <end position="261"/>
    </location>
</feature>
<feature type="region of interest" description="Disordered" evidence="4">
    <location>
        <begin position="161"/>
        <end position="191"/>
    </location>
</feature>
<feature type="region of interest" description="Disordered" evidence="4">
    <location>
        <begin position="278"/>
        <end position="342"/>
    </location>
</feature>
<feature type="coiled-coil region" evidence="3">
    <location>
        <begin position="13"/>
        <end position="34"/>
    </location>
</feature>
<feature type="coiled-coil region" evidence="3">
    <location>
        <begin position="102"/>
        <end position="136"/>
    </location>
</feature>
<feature type="compositionally biased region" description="Polar residues" evidence="4">
    <location>
        <begin position="179"/>
        <end position="191"/>
    </location>
</feature>
<feature type="compositionally biased region" description="Polar residues" evidence="4">
    <location>
        <begin position="295"/>
        <end position="321"/>
    </location>
</feature>
<feature type="compositionally biased region" description="Basic and acidic residues" evidence="4">
    <location>
        <begin position="322"/>
        <end position="342"/>
    </location>
</feature>
<dbReference type="EMBL" id="FO080371">
    <property type="protein sequence ID" value="CCD63258.1"/>
    <property type="molecule type" value="Genomic_DNA"/>
</dbReference>
<dbReference type="PIR" id="T15418">
    <property type="entry name" value="T15418"/>
</dbReference>
<dbReference type="RefSeq" id="NP_508788.1">
    <property type="nucleotide sequence ID" value="NM_076387.7"/>
</dbReference>
<dbReference type="SMR" id="Q17667"/>
<dbReference type="FunCoup" id="Q17667">
    <property type="interactions" value="2568"/>
</dbReference>
<dbReference type="STRING" id="6239.C05E11.1b.1"/>
<dbReference type="PaxDb" id="6239-C05E11.1"/>
<dbReference type="PeptideAtlas" id="Q17667"/>
<dbReference type="EnsemblMetazoa" id="C05E11.1a.1">
    <property type="protein sequence ID" value="C05E11.1a.1"/>
    <property type="gene ID" value="WBGene00015492"/>
</dbReference>
<dbReference type="GeneID" id="180731"/>
<dbReference type="KEGG" id="cel:CELE_C05E11.1"/>
<dbReference type="AGR" id="WB:WBGene00015492"/>
<dbReference type="CTD" id="180731"/>
<dbReference type="WormBase" id="C05E11.1a">
    <property type="protein sequence ID" value="CE29561"/>
    <property type="gene ID" value="WBGene00015492"/>
    <property type="gene designation" value="lnp-1"/>
</dbReference>
<dbReference type="eggNOG" id="KOG2846">
    <property type="taxonomic scope" value="Eukaryota"/>
</dbReference>
<dbReference type="GeneTree" id="ENSGT00390000001859"/>
<dbReference type="HOGENOM" id="CLU_797505_0_0_1"/>
<dbReference type="InParanoid" id="Q17667"/>
<dbReference type="OMA" id="YAYDGNE"/>
<dbReference type="OrthoDB" id="3169036at2759"/>
<dbReference type="PhylomeDB" id="Q17667"/>
<dbReference type="PRO" id="PR:Q17667"/>
<dbReference type="Proteomes" id="UP000001940">
    <property type="component" value="Chromosome X"/>
</dbReference>
<dbReference type="Bgee" id="WBGene00015492">
    <property type="expression patterns" value="Expressed in embryo and 4 other cell types or tissues"/>
</dbReference>
<dbReference type="ExpressionAtlas" id="Q17667">
    <property type="expression patterns" value="baseline and differential"/>
</dbReference>
<dbReference type="GO" id="GO:0005789">
    <property type="term" value="C:endoplasmic reticulum membrane"/>
    <property type="evidence" value="ECO:0007669"/>
    <property type="project" value="UniProtKB-SubCell"/>
</dbReference>
<dbReference type="GO" id="GO:0071782">
    <property type="term" value="C:endoplasmic reticulum tubular network"/>
    <property type="evidence" value="ECO:0000318"/>
    <property type="project" value="GO_Central"/>
</dbReference>
<dbReference type="GO" id="GO:0016020">
    <property type="term" value="C:membrane"/>
    <property type="evidence" value="ECO:0000314"/>
    <property type="project" value="UniProtKB"/>
</dbReference>
<dbReference type="GO" id="GO:0043005">
    <property type="term" value="C:neuron projection"/>
    <property type="evidence" value="ECO:0000314"/>
    <property type="project" value="WormBase"/>
</dbReference>
<dbReference type="GO" id="GO:0043025">
    <property type="term" value="C:neuronal cell body"/>
    <property type="evidence" value="ECO:0000314"/>
    <property type="project" value="WormBase"/>
</dbReference>
<dbReference type="GO" id="GO:0008021">
    <property type="term" value="C:synaptic vesicle"/>
    <property type="evidence" value="ECO:0000314"/>
    <property type="project" value="WormBase"/>
</dbReference>
<dbReference type="GO" id="GO:0008270">
    <property type="term" value="F:zinc ion binding"/>
    <property type="evidence" value="ECO:0007669"/>
    <property type="project" value="UniProtKB-KW"/>
</dbReference>
<dbReference type="GO" id="GO:0007268">
    <property type="term" value="P:chemical synaptic transmission"/>
    <property type="evidence" value="ECO:0000315"/>
    <property type="project" value="UniProtKB"/>
</dbReference>
<dbReference type="GO" id="GO:0071786">
    <property type="term" value="P:endoplasmic reticulum tubular network organization"/>
    <property type="evidence" value="ECO:0000318"/>
    <property type="project" value="GO_Central"/>
</dbReference>
<dbReference type="GO" id="GO:0007626">
    <property type="term" value="P:locomotory behavior"/>
    <property type="evidence" value="ECO:0000315"/>
    <property type="project" value="WormBase"/>
</dbReference>
<dbReference type="GO" id="GO:0046662">
    <property type="term" value="P:regulation of egg-laying behavior"/>
    <property type="evidence" value="ECO:0000315"/>
    <property type="project" value="WormBase"/>
</dbReference>
<dbReference type="GO" id="GO:0032880">
    <property type="term" value="P:regulation of protein localization"/>
    <property type="evidence" value="ECO:0000314"/>
    <property type="project" value="UniProtKB"/>
</dbReference>
<dbReference type="GO" id="GO:0050803">
    <property type="term" value="P:regulation of synapse structure or activity"/>
    <property type="evidence" value="ECO:0000315"/>
    <property type="project" value="WormBase"/>
</dbReference>
<dbReference type="GO" id="GO:0007416">
    <property type="term" value="P:synapse assembly"/>
    <property type="evidence" value="ECO:0000315"/>
    <property type="project" value="UniProtKB"/>
</dbReference>
<dbReference type="GO" id="GO:0048489">
    <property type="term" value="P:synaptic vesicle transport"/>
    <property type="evidence" value="ECO:0000315"/>
    <property type="project" value="WormBase"/>
</dbReference>
<dbReference type="InterPro" id="IPR040115">
    <property type="entry name" value="Lnp"/>
</dbReference>
<dbReference type="InterPro" id="IPR019273">
    <property type="entry name" value="Lunapark_Znf"/>
</dbReference>
<dbReference type="PANTHER" id="PTHR22166">
    <property type="entry name" value="ENDOPLASMIC RETICULUM JUNCTION FORMATION PROTEIN LUNAPARK"/>
    <property type="match status" value="1"/>
</dbReference>
<dbReference type="PANTHER" id="PTHR22166:SF12">
    <property type="entry name" value="ENDOPLASMIC RETICULUM JUNCTION FORMATION PROTEIN LUNAPARK"/>
    <property type="match status" value="1"/>
</dbReference>
<dbReference type="Pfam" id="PF10058">
    <property type="entry name" value="Zn_ribbon_10"/>
    <property type="match status" value="1"/>
</dbReference>
<name>LNP1_CAEEL</name>
<proteinExistence type="evidence at transcript level"/>
<gene>
    <name type="primary">lnp-1</name>
    <name type="ORF">C05E11.1</name>
</gene>
<organism>
    <name type="scientific">Caenorhabditis elegans</name>
    <dbReference type="NCBI Taxonomy" id="6239"/>
    <lineage>
        <taxon>Eukaryota</taxon>
        <taxon>Metazoa</taxon>
        <taxon>Ecdysozoa</taxon>
        <taxon>Nematoda</taxon>
        <taxon>Chromadorea</taxon>
        <taxon>Rhabditida</taxon>
        <taxon>Rhabditina</taxon>
        <taxon>Rhabditomorpha</taxon>
        <taxon>Rhabditoidea</taxon>
        <taxon>Rhabditidae</taxon>
        <taxon>Peloderinae</taxon>
        <taxon>Caenorhabditis</taxon>
    </lineage>
</organism>
<sequence length="342" mass="38558">MGNLFSRNKSPATELERVALSIDDLKKRLQTISSSNTNTLYYYYMSIVVILSIAMAHTWLRFEDPQKTYVACALMLGAIGIVLAGRYVINGFFSWRTNRTTQKLENAISQKTTLLDLVKETLKFKEAKEILDRYEKIEQNTTIDKNDSTLKSPSPIKKLTADSSMFATPKQEQKRVETPTAQGPNSAMNSMNMTPYHQRNRNAVPIRPFLRQTTAFDRVLDYFMSDGPNCRNALICSICHTHNGMSTPAEYPYISFRCFECGHLNPAKKMGPQIPLTRPPMGPKGIQHNGRVGPSENTHNMMENQKPSTDLTPSASQNGSEKGSDSENEKVPESKTMETEFH</sequence>
<evidence type="ECO:0000250" key="1"/>
<evidence type="ECO:0000250" key="2">
    <source>
        <dbReference type="UniProtKB" id="Q9C0E8"/>
    </source>
</evidence>
<evidence type="ECO:0000255" key="3"/>
<evidence type="ECO:0000256" key="4">
    <source>
        <dbReference type="SAM" id="MobiDB-lite"/>
    </source>
</evidence>
<evidence type="ECO:0000269" key="5">
    <source>
    </source>
</evidence>
<evidence type="ECO:0000305" key="6"/>